<gene>
    <name evidence="1" type="primary">yidE</name>
    <name type="ordered locus">ECS88_4107</name>
</gene>
<evidence type="ECO:0000255" key="1">
    <source>
        <dbReference type="HAMAP-Rule" id="MF_01016"/>
    </source>
</evidence>
<name>YIDE_ECO45</name>
<reference key="1">
    <citation type="journal article" date="2009" name="PLoS Genet.">
        <title>Organised genome dynamics in the Escherichia coli species results in highly diverse adaptive paths.</title>
        <authorList>
            <person name="Touchon M."/>
            <person name="Hoede C."/>
            <person name="Tenaillon O."/>
            <person name="Barbe V."/>
            <person name="Baeriswyl S."/>
            <person name="Bidet P."/>
            <person name="Bingen E."/>
            <person name="Bonacorsi S."/>
            <person name="Bouchier C."/>
            <person name="Bouvet O."/>
            <person name="Calteau A."/>
            <person name="Chiapello H."/>
            <person name="Clermont O."/>
            <person name="Cruveiller S."/>
            <person name="Danchin A."/>
            <person name="Diard M."/>
            <person name="Dossat C."/>
            <person name="Karoui M.E."/>
            <person name="Frapy E."/>
            <person name="Garry L."/>
            <person name="Ghigo J.M."/>
            <person name="Gilles A.M."/>
            <person name="Johnson J."/>
            <person name="Le Bouguenec C."/>
            <person name="Lescat M."/>
            <person name="Mangenot S."/>
            <person name="Martinez-Jehanne V."/>
            <person name="Matic I."/>
            <person name="Nassif X."/>
            <person name="Oztas S."/>
            <person name="Petit M.A."/>
            <person name="Pichon C."/>
            <person name="Rouy Z."/>
            <person name="Ruf C.S."/>
            <person name="Schneider D."/>
            <person name="Tourret J."/>
            <person name="Vacherie B."/>
            <person name="Vallenet D."/>
            <person name="Medigue C."/>
            <person name="Rocha E.P.C."/>
            <person name="Denamur E."/>
        </authorList>
    </citation>
    <scope>NUCLEOTIDE SEQUENCE [LARGE SCALE GENOMIC DNA]</scope>
    <source>
        <strain>S88 / ExPEC</strain>
    </source>
</reference>
<proteinExistence type="inferred from homology"/>
<sequence length="553" mass="58904">MSDIALTVSILALVAVVGLFIGNVKFRGVGLGIGGVLFGGIIVGHFVSQAGMTLSSDMLHVIQEFGLILFVYTIGIQVGPGFFASLRVSGLRLNLFAVLIVIIGGLVTAILHKLFDIPLPVVLGIFSGAVTNTPALGAGQQILRDLGTPMAMVDQMGMSYAMAYPFGICGILFTMWMLRVIFRVNVETEAQQHESTRTNGGALIRTINIRVENPNLHNLAIKDVPILNGDKVICSRLKREETLKVPSPETVIQLGDLLHLVGQPADLHNAQLVIGQEVDTSLSTKGTDLRVARVVVTNENVLGKRIRDLHFKERYDVVISRLNRAGVELVASSDISLQFGDILNLVGRPSAIDAVANVLGNAQQKLQQVQMLPVFIGIGLGVLLGSIPVFVPGFPAALKLGLAGGPLIMALILGRIGSIGKLYWFMPPSANLALRELGIVLFLSVVGLKSGGDFIHTLVDGEGLSWIGYGALITAVPLITVGILARMLAKMNYLTMCGMLAGSMTDPPALAFANNLHPTSGAAALSYATVYPLVMFLRIITPQLLAVLFWSIG</sequence>
<keyword id="KW-1003">Cell membrane</keyword>
<keyword id="KW-0472">Membrane</keyword>
<keyword id="KW-1185">Reference proteome</keyword>
<keyword id="KW-0677">Repeat</keyword>
<keyword id="KW-0812">Transmembrane</keyword>
<keyword id="KW-1133">Transmembrane helix</keyword>
<keyword id="KW-0813">Transport</keyword>
<protein>
    <recommendedName>
        <fullName evidence="1">Putative transport protein YidE</fullName>
    </recommendedName>
</protein>
<feature type="chain" id="PRO_1000135204" description="Putative transport protein YidE">
    <location>
        <begin position="1"/>
        <end position="553"/>
    </location>
</feature>
<feature type="transmembrane region" description="Helical" evidence="1">
    <location>
        <begin position="4"/>
        <end position="24"/>
    </location>
</feature>
<feature type="transmembrane region" description="Helical" evidence="1">
    <location>
        <begin position="28"/>
        <end position="48"/>
    </location>
</feature>
<feature type="transmembrane region" description="Helical" evidence="1">
    <location>
        <begin position="65"/>
        <end position="85"/>
    </location>
</feature>
<feature type="transmembrane region" description="Helical" evidence="1">
    <location>
        <begin position="95"/>
        <end position="115"/>
    </location>
</feature>
<feature type="transmembrane region" description="Helical" evidence="1">
    <location>
        <begin position="158"/>
        <end position="178"/>
    </location>
</feature>
<feature type="transmembrane region" description="Helical" evidence="1">
    <location>
        <begin position="371"/>
        <end position="391"/>
    </location>
</feature>
<feature type="transmembrane region" description="Helical" evidence="1">
    <location>
        <begin position="393"/>
        <end position="413"/>
    </location>
</feature>
<feature type="transmembrane region" description="Helical" evidence="1">
    <location>
        <begin position="439"/>
        <end position="459"/>
    </location>
</feature>
<feature type="transmembrane region" description="Helical" evidence="1">
    <location>
        <begin position="464"/>
        <end position="484"/>
    </location>
</feature>
<feature type="transmembrane region" description="Helical" evidence="1">
    <location>
        <begin position="493"/>
        <end position="513"/>
    </location>
</feature>
<feature type="transmembrane region" description="Helical" evidence="1">
    <location>
        <begin position="533"/>
        <end position="553"/>
    </location>
</feature>
<feature type="domain" description="RCK C-terminal 1" evidence="1">
    <location>
        <begin position="191"/>
        <end position="276"/>
    </location>
</feature>
<feature type="domain" description="RCK C-terminal 2" evidence="1">
    <location>
        <begin position="279"/>
        <end position="361"/>
    </location>
</feature>
<organism>
    <name type="scientific">Escherichia coli O45:K1 (strain S88 / ExPEC)</name>
    <dbReference type="NCBI Taxonomy" id="585035"/>
    <lineage>
        <taxon>Bacteria</taxon>
        <taxon>Pseudomonadati</taxon>
        <taxon>Pseudomonadota</taxon>
        <taxon>Gammaproteobacteria</taxon>
        <taxon>Enterobacterales</taxon>
        <taxon>Enterobacteriaceae</taxon>
        <taxon>Escherichia</taxon>
    </lineage>
</organism>
<comment type="subcellular location">
    <subcellularLocation>
        <location evidence="1">Cell membrane</location>
        <topology evidence="1">Multi-pass membrane protein</topology>
    </subcellularLocation>
</comment>
<comment type="similarity">
    <text evidence="1">Belongs to the AAE transporter (TC 2.A.81) family. YidE subfamily.</text>
</comment>
<dbReference type="EMBL" id="CU928161">
    <property type="protein sequence ID" value="CAR05313.1"/>
    <property type="molecule type" value="Genomic_DNA"/>
</dbReference>
<dbReference type="RefSeq" id="WP_001279773.1">
    <property type="nucleotide sequence ID" value="NC_011742.1"/>
</dbReference>
<dbReference type="SMR" id="B7MGA5"/>
<dbReference type="KEGG" id="ecz:ECS88_4107"/>
<dbReference type="HOGENOM" id="CLU_035023_3_1_6"/>
<dbReference type="Proteomes" id="UP000000747">
    <property type="component" value="Chromosome"/>
</dbReference>
<dbReference type="GO" id="GO:0005886">
    <property type="term" value="C:plasma membrane"/>
    <property type="evidence" value="ECO:0007669"/>
    <property type="project" value="UniProtKB-SubCell"/>
</dbReference>
<dbReference type="GO" id="GO:0008324">
    <property type="term" value="F:monoatomic cation transmembrane transporter activity"/>
    <property type="evidence" value="ECO:0007669"/>
    <property type="project" value="InterPro"/>
</dbReference>
<dbReference type="GO" id="GO:0006813">
    <property type="term" value="P:potassium ion transport"/>
    <property type="evidence" value="ECO:0007669"/>
    <property type="project" value="InterPro"/>
</dbReference>
<dbReference type="FunFam" id="3.30.70.1450:FF:000004">
    <property type="entry name" value="Putative transport protein YidE"/>
    <property type="match status" value="1"/>
</dbReference>
<dbReference type="Gene3D" id="3.30.70.1450">
    <property type="entry name" value="Regulator of K+ conductance, C-terminal domain"/>
    <property type="match status" value="2"/>
</dbReference>
<dbReference type="HAMAP" id="MF_01016">
    <property type="entry name" value="YidE"/>
    <property type="match status" value="1"/>
</dbReference>
<dbReference type="InterPro" id="IPR050144">
    <property type="entry name" value="AAE_transporter"/>
</dbReference>
<dbReference type="InterPro" id="IPR006037">
    <property type="entry name" value="RCK_C"/>
</dbReference>
<dbReference type="InterPro" id="IPR036721">
    <property type="entry name" value="RCK_C_sf"/>
</dbReference>
<dbReference type="InterPro" id="IPR023018">
    <property type="entry name" value="Transpt_YidE_put"/>
</dbReference>
<dbReference type="InterPro" id="IPR006512">
    <property type="entry name" value="YidE_YbjL"/>
</dbReference>
<dbReference type="NCBIfam" id="NF003007">
    <property type="entry name" value="PRK03818.1"/>
    <property type="match status" value="1"/>
</dbReference>
<dbReference type="NCBIfam" id="TIGR01625">
    <property type="entry name" value="YidE_YbjL_dupl"/>
    <property type="match status" value="2"/>
</dbReference>
<dbReference type="PANTHER" id="PTHR30445">
    <property type="entry name" value="K(+)_H(+) ANTIPORTER SUBUNIT KHTT"/>
    <property type="match status" value="1"/>
</dbReference>
<dbReference type="PANTHER" id="PTHR30445:SF3">
    <property type="entry name" value="TRANSPORT PROTEIN YIDE-RELATED"/>
    <property type="match status" value="1"/>
</dbReference>
<dbReference type="Pfam" id="PF06826">
    <property type="entry name" value="Asp-Al_Ex"/>
    <property type="match status" value="2"/>
</dbReference>
<dbReference type="Pfam" id="PF02080">
    <property type="entry name" value="TrkA_C"/>
    <property type="match status" value="2"/>
</dbReference>
<dbReference type="SUPFAM" id="SSF116726">
    <property type="entry name" value="TrkA C-terminal domain-like"/>
    <property type="match status" value="2"/>
</dbReference>
<dbReference type="PROSITE" id="PS51202">
    <property type="entry name" value="RCK_C"/>
    <property type="match status" value="2"/>
</dbReference>
<accession>B7MGA5</accession>